<organism>
    <name type="scientific">Homo sapiens</name>
    <name type="common">Human</name>
    <dbReference type="NCBI Taxonomy" id="9606"/>
    <lineage>
        <taxon>Eukaryota</taxon>
        <taxon>Metazoa</taxon>
        <taxon>Chordata</taxon>
        <taxon>Craniata</taxon>
        <taxon>Vertebrata</taxon>
        <taxon>Euteleostomi</taxon>
        <taxon>Mammalia</taxon>
        <taxon>Eutheria</taxon>
        <taxon>Euarchontoglires</taxon>
        <taxon>Primates</taxon>
        <taxon>Haplorrhini</taxon>
        <taxon>Catarrhini</taxon>
        <taxon>Hominidae</taxon>
        <taxon>Homo</taxon>
    </lineage>
</organism>
<sequence length="439" mass="51958">MSVPSALMKQPPIQSTAGAVPVRNEKGEISMEKVKVKRYVSGKRPDYAPMESSDEEDEEFQFIKKAKEQEAEPEEQEEDSSSDPRLRRLQNRISEDVEERLARHRKIVEPEVVGESDSEVEGDAWRMEREDSSEEEEEEIDDEEIERRRGMMRQRAQERKNEEMEVMEVEDEGRSGEESESESEYEEYTDSEDEMEPRLKPVFIRKKDRVTVQEREAEALKQKELEQEAKRMAEERRKYTLKIVEEETKKELEENKRSLAALDALNTDDENDEEEYEAWKVRELKRIKRDREDREALEKEKAEIERMRNLTEEERRAELRANGKVITNKAVKGKYKFLQKYYHRGAFFMDEDEEVYKRDFSAPTLEDHFNKTILPKVMQVKNFGRSGRTKYTHLVDQDTTSFDSAWGQESAQNTKFFKQKAAGVRDVFERPSAKKRKTT</sequence>
<accession>P55081</accession>
<accession>Q86TG6</accession>
<keyword id="KW-0002">3D-structure</keyword>
<keyword id="KW-0007">Acetylation</keyword>
<keyword id="KW-1017">Isopeptide bond</keyword>
<keyword id="KW-0507">mRNA processing</keyword>
<keyword id="KW-0508">mRNA splicing</keyword>
<keyword id="KW-0539">Nucleus</keyword>
<keyword id="KW-0597">Phosphoprotein</keyword>
<keyword id="KW-1267">Proteomics identification</keyword>
<keyword id="KW-1185">Reference proteome</keyword>
<keyword id="KW-0747">Spliceosome</keyword>
<keyword id="KW-0832">Ubl conjugation</keyword>
<gene>
    <name evidence="7" type="primary">MFAP1</name>
</gene>
<protein>
    <recommendedName>
        <fullName evidence="7">Microfibrillar-associated protein 1</fullName>
    </recommendedName>
    <alternativeName>
        <fullName evidence="5">Spliceosome B complex protein MFAP1</fullName>
    </alternativeName>
</protein>
<comment type="function">
    <text evidence="4">Involved in pre-mRNA splicing as a component of the spliceosome.</text>
</comment>
<comment type="subunit">
    <text evidence="2 3 4">Component of the spliceosome B complex (PubMed:28781166). Interacts with PRPF38A (via N-terminal interaction domain) (PubMed:26673105, PubMed:27773687).</text>
</comment>
<comment type="interaction">
    <interactant intactId="EBI-1048159">
        <id>P55081</id>
    </interactant>
    <interactant intactId="EBI-13329511">
        <id>Q96BT7-2</id>
        <label>ALKBH8</label>
    </interactant>
    <organismsDiffer>false</organismsDiffer>
    <experiments>3</experiments>
</comment>
<comment type="interaction">
    <interactant intactId="EBI-1048159">
        <id>P55081</id>
    </interactant>
    <interactant intactId="EBI-746752">
        <id>Q9Y2J4</id>
        <label>AMOTL2</label>
    </interactant>
    <organismsDiffer>false</organismsDiffer>
    <experiments>3</experiments>
</comment>
<comment type="interaction">
    <interactant intactId="EBI-1048159">
        <id>P55081</id>
    </interactant>
    <interactant intactId="EBI-10187270">
        <id>Q9Y2J4-4</id>
        <label>AMOTL2</label>
    </interactant>
    <organismsDiffer>false</organismsDiffer>
    <experiments>3</experiments>
</comment>
<comment type="interaction">
    <interactant intactId="EBI-1048159">
        <id>P55081</id>
    </interactant>
    <interactant intactId="EBI-297683">
        <id>Q96CW1</id>
        <label>AP2M1</label>
    </interactant>
    <organismsDiffer>false</organismsDiffer>
    <experiments>3</experiments>
</comment>
<comment type="interaction">
    <interactant intactId="EBI-1048159">
        <id>P55081</id>
    </interactant>
    <interactant intactId="EBI-10181188">
        <id>Q8N7W2-2</id>
        <label>BEND7</label>
    </interactant>
    <organismsDiffer>false</organismsDiffer>
    <experiments>6</experiments>
</comment>
<comment type="interaction">
    <interactant intactId="EBI-1048159">
        <id>P55081</id>
    </interactant>
    <interactant intactId="EBI-11975051">
        <id>Q8TD16-2</id>
        <label>BICD2</label>
    </interactant>
    <organismsDiffer>false</organismsDiffer>
    <experiments>3</experiments>
</comment>
<comment type="interaction">
    <interactant intactId="EBI-1048159">
        <id>P55081</id>
    </interactant>
    <interactant intactId="EBI-2548012">
        <id>Q9H2G9</id>
        <label>BLZF1</label>
    </interactant>
    <organismsDiffer>false</organismsDiffer>
    <experiments>3</experiments>
</comment>
<comment type="interaction">
    <interactant intactId="EBI-1048159">
        <id>P55081</id>
    </interactant>
    <interactant intactId="EBI-751319">
        <id>Q9H257</id>
        <label>CARD9</label>
    </interactant>
    <organismsDiffer>false</organismsDiffer>
    <experiments>3</experiments>
</comment>
<comment type="interaction">
    <interactant intactId="EBI-1048159">
        <id>P55081</id>
    </interactant>
    <interactant intactId="EBI-11530605">
        <id>Q9H257-2</id>
        <label>CARD9</label>
    </interactant>
    <organismsDiffer>false</organismsDiffer>
    <experiments>3</experiments>
</comment>
<comment type="interaction">
    <interactant intactId="EBI-1048159">
        <id>P55081</id>
    </interactant>
    <interactant intactId="EBI-10171570">
        <id>Q68D86</id>
        <label>CCDC102B</label>
    </interactant>
    <organismsDiffer>false</organismsDiffer>
    <experiments>3</experiments>
</comment>
<comment type="interaction">
    <interactant intactId="EBI-1048159">
        <id>P55081</id>
    </interactant>
    <interactant intactId="EBI-2808286">
        <id>Q2TAC2</id>
        <label>CCDC57</label>
    </interactant>
    <organismsDiffer>false</organismsDiffer>
    <experiments>3</experiments>
</comment>
<comment type="interaction">
    <interactant intactId="EBI-1048159">
        <id>P55081</id>
    </interactant>
    <interactant intactId="EBI-970231">
        <id>O60729</id>
        <label>CDC14B</label>
    </interactant>
    <organismsDiffer>false</organismsDiffer>
    <experiments>3</experiments>
</comment>
<comment type="interaction">
    <interactant intactId="EBI-1048159">
        <id>P55081</id>
    </interactant>
    <interactant intactId="EBI-5278764">
        <id>Q96GN5</id>
        <label>CDCA7L</label>
    </interactant>
    <organismsDiffer>false</organismsDiffer>
    <experiments>3</experiments>
</comment>
<comment type="interaction">
    <interactant intactId="EBI-1048159">
        <id>P55081</id>
    </interactant>
    <interactant intactId="EBI-747776">
        <id>Q53EZ4</id>
        <label>CEP55</label>
    </interactant>
    <organismsDiffer>false</organismsDiffer>
    <experiments>6</experiments>
</comment>
<comment type="interaction">
    <interactant intactId="EBI-1048159">
        <id>P55081</id>
    </interactant>
    <interactant intactId="EBI-1104570">
        <id>Q8IYX8</id>
        <label>CEP57L1</label>
    </interactant>
    <organismsDiffer>false</organismsDiffer>
    <experiments>3</experiments>
</comment>
<comment type="interaction">
    <interactant intactId="EBI-1048159">
        <id>P55081</id>
    </interactant>
    <interactant intactId="EBI-10181988">
        <id>Q8IYX8-2</id>
        <label>CEP57L1</label>
    </interactant>
    <organismsDiffer>false</organismsDiffer>
    <experiments>3</experiments>
</comment>
<comment type="interaction">
    <interactant intactId="EBI-1048159">
        <id>P55081</id>
    </interactant>
    <interactant intactId="EBI-739624">
        <id>Q8NHQ1</id>
        <label>CEP70</label>
    </interactant>
    <organismsDiffer>false</organismsDiffer>
    <experiments>6</experiments>
</comment>
<comment type="interaction">
    <interactant intactId="EBI-1048159">
        <id>P55081</id>
    </interactant>
    <interactant intactId="EBI-742887">
        <id>Q8TAP6</id>
        <label>CEP76</label>
    </interactant>
    <organismsDiffer>false</organismsDiffer>
    <experiments>3</experiments>
</comment>
<comment type="interaction">
    <interactant intactId="EBI-1048159">
        <id>P55081</id>
    </interactant>
    <interactant intactId="EBI-3866319">
        <id>Q9Y2V7</id>
        <label>COG6</label>
    </interactant>
    <organismsDiffer>false</organismsDiffer>
    <experiments>3</experiments>
</comment>
<comment type="interaction">
    <interactant intactId="EBI-1048159">
        <id>P55081</id>
    </interactant>
    <interactant intactId="EBI-945751">
        <id>P38432</id>
        <label>COIL</label>
    </interactant>
    <organismsDiffer>false</organismsDiffer>
    <experiments>3</experiments>
</comment>
<comment type="interaction">
    <interactant intactId="EBI-1048159">
        <id>P55081</id>
    </interactant>
    <interactant intactId="EBI-2795449">
        <id>Q9H147</id>
        <label>DNTTIP1</label>
    </interactant>
    <organismsDiffer>false</organismsDiffer>
    <experiments>3</experiments>
</comment>
<comment type="interaction">
    <interactant intactId="EBI-1048159">
        <id>P55081</id>
    </interactant>
    <interactant intactId="EBI-10175124">
        <id>Q8IZU0</id>
        <label>FAM9B</label>
    </interactant>
    <organismsDiffer>false</organismsDiffer>
    <experiments>3</experiments>
</comment>
<comment type="interaction">
    <interactant intactId="EBI-1048159">
        <id>P55081</id>
    </interactant>
    <interactant intactId="EBI-11958845">
        <id>O94868-3</id>
        <label>FCHSD2</label>
    </interactant>
    <organismsDiffer>false</organismsDiffer>
    <experiments>3</experiments>
</comment>
<comment type="interaction">
    <interactant intactId="EBI-1048159">
        <id>P55081</id>
    </interactant>
    <interactant intactId="EBI-11022345">
        <id>P51114-2</id>
        <label>FXR1</label>
    </interactant>
    <organismsDiffer>false</organismsDiffer>
    <experiments>3</experiments>
</comment>
<comment type="interaction">
    <interactant intactId="EBI-1048159">
        <id>P55081</id>
    </interactant>
    <interactant intactId="EBI-740459">
        <id>P51116</id>
        <label>FXR2</label>
    </interactant>
    <organismsDiffer>false</organismsDiffer>
    <experiments>6</experiments>
</comment>
<comment type="interaction">
    <interactant intactId="EBI-1048159">
        <id>P55081</id>
    </interactant>
    <interactant intactId="EBI-1052570">
        <id>O95995</id>
        <label>GAS8</label>
    </interactant>
    <organismsDiffer>false</organismsDiffer>
    <experiments>3</experiments>
</comment>
<comment type="interaction">
    <interactant intactId="EBI-1048159">
        <id>P55081</id>
    </interactant>
    <interactant intactId="EBI-743722">
        <id>Q5VSY0</id>
        <label>GKAP1</label>
    </interactant>
    <organismsDiffer>false</organismsDiffer>
    <experiments>3</experiments>
</comment>
<comment type="interaction">
    <interactant intactId="EBI-1048159">
        <id>P55081</id>
    </interactant>
    <interactant intactId="EBI-2548508">
        <id>Q96IK5</id>
        <label>GMCL1</label>
    </interactant>
    <organismsDiffer>false</organismsDiffer>
    <experiments>3</experiments>
</comment>
<comment type="interaction">
    <interactant intactId="EBI-1048159">
        <id>P55081</id>
    </interactant>
    <interactant intactId="EBI-618309">
        <id>Q08379</id>
        <label>GOLGA2</label>
    </interactant>
    <organismsDiffer>false</organismsDiffer>
    <experiments>6</experiments>
</comment>
<comment type="interaction">
    <interactant intactId="EBI-1048159">
        <id>P55081</id>
    </interactant>
    <interactant intactId="EBI-5916454">
        <id>A6NEM1</id>
        <label>GOLGA6L9</label>
    </interactant>
    <organismsDiffer>false</organismsDiffer>
    <experiments>3</experiments>
</comment>
<comment type="interaction">
    <interactant intactId="EBI-1048159">
        <id>P55081</id>
    </interactant>
    <interactant intactId="EBI-11519926">
        <id>Q6PI77</id>
        <label>GPRASP3</label>
    </interactant>
    <organismsDiffer>false</organismsDiffer>
    <experiments>3</experiments>
</comment>
<comment type="interaction">
    <interactant intactId="EBI-1048159">
        <id>P55081</id>
    </interactant>
    <interactant intactId="EBI-717919">
        <id>Q4V328</id>
        <label>GRIPAP1</label>
    </interactant>
    <organismsDiffer>false</organismsDiffer>
    <experiments>3</experiments>
</comment>
<comment type="interaction">
    <interactant intactId="EBI-1048159">
        <id>P55081</id>
    </interactant>
    <interactant intactId="EBI-2549423">
        <id>Q6NT76</id>
        <label>HMBOX1</label>
    </interactant>
    <organismsDiffer>false</organismsDiffer>
    <experiments>6</experiments>
</comment>
<comment type="interaction">
    <interactant intactId="EBI-1048159">
        <id>P55081</id>
    </interactant>
    <interactant intactId="EBI-748420">
        <id>Q9NSC5</id>
        <label>HOMER3</label>
    </interactant>
    <organismsDiffer>false</organismsDiffer>
    <experiments>3</experiments>
</comment>
<comment type="interaction">
    <interactant intactId="EBI-1048159">
        <id>P55081</id>
    </interactant>
    <interactant intactId="EBI-10961706">
        <id>Q96ED9-2</id>
        <label>HOOK2</label>
    </interactant>
    <organismsDiffer>false</organismsDiffer>
    <experiments>3</experiments>
</comment>
<comment type="interaction">
    <interactant intactId="EBI-1048159">
        <id>P55081</id>
    </interactant>
    <interactant intactId="EBI-7116203">
        <id>O75031</id>
        <label>HSF2BP</label>
    </interactant>
    <organismsDiffer>false</organismsDiffer>
    <experiments>3</experiments>
</comment>
<comment type="interaction">
    <interactant intactId="EBI-1048159">
        <id>P55081</id>
    </interactant>
    <interactant intactId="EBI-713456">
        <id>Q13123</id>
        <label>IK</label>
    </interactant>
    <organismsDiffer>false</organismsDiffer>
    <experiments>2</experiments>
</comment>
<comment type="interaction">
    <interactant intactId="EBI-1048159">
        <id>P55081</id>
    </interactant>
    <interactant intactId="EBI-715394">
        <id>Q9H079</id>
        <label>KATNBL1</label>
    </interactant>
    <organismsDiffer>false</organismsDiffer>
    <experiments>7</experiments>
</comment>
<comment type="interaction">
    <interactant intactId="EBI-1048159">
        <id>P55081</id>
    </interactant>
    <interactant intactId="EBI-2125614">
        <id>Q9BVG8</id>
        <label>KIFC3</label>
    </interactant>
    <organismsDiffer>false</organismsDiffer>
    <experiments>3</experiments>
</comment>
<comment type="interaction">
    <interactant intactId="EBI-1048159">
        <id>P55081</id>
    </interactant>
    <interactant intactId="EBI-14069005">
        <id>Q9BVG8-5</id>
        <label>KIFC3</label>
    </interactant>
    <organismsDiffer>false</organismsDiffer>
    <experiments>3</experiments>
</comment>
<comment type="interaction">
    <interactant intactId="EBI-1048159">
        <id>P55081</id>
    </interactant>
    <interactant intactId="EBI-746999">
        <id>O95198</id>
        <label>KLHL2</label>
    </interactant>
    <organismsDiffer>false</organismsDiffer>
    <experiments>3</experiments>
</comment>
<comment type="interaction">
    <interactant intactId="EBI-1048159">
        <id>P55081</id>
    </interactant>
    <interactant intactId="EBI-10171697">
        <id>Q6A162</id>
        <label>KRT40</label>
    </interactant>
    <organismsDiffer>false</organismsDiffer>
    <experiments>3</experiments>
</comment>
<comment type="interaction">
    <interactant intactId="EBI-1048159">
        <id>P55081</id>
    </interactant>
    <interactant intactId="EBI-11985629">
        <id>Q96JM7-2</id>
        <label>L3MBTL3</label>
    </interactant>
    <organismsDiffer>false</organismsDiffer>
    <experiments>3</experiments>
</comment>
<comment type="interaction">
    <interactant intactId="EBI-1048159">
        <id>P55081</id>
    </interactant>
    <interactant intactId="EBI-740738">
        <id>O95751</id>
        <label>LDOC1</label>
    </interactant>
    <organismsDiffer>false</organismsDiffer>
    <experiments>6</experiments>
</comment>
<comment type="interaction">
    <interactant intactId="EBI-1048159">
        <id>P55081</id>
    </interactant>
    <interactant intactId="EBI-2830427">
        <id>Q03252</id>
        <label>LMNB2</label>
    </interactant>
    <organismsDiffer>false</organismsDiffer>
    <experiments>3</experiments>
</comment>
<comment type="interaction">
    <interactant intactId="EBI-1048159">
        <id>P55081</id>
    </interactant>
    <interactant intactId="EBI-1216080">
        <id>Q9Y250</id>
        <label>LZTS1</label>
    </interactant>
    <organismsDiffer>false</organismsDiffer>
    <experiments>3</experiments>
</comment>
<comment type="interaction">
    <interactant intactId="EBI-1048159">
        <id>P55081</id>
    </interactant>
    <interactant intactId="EBI-742610">
        <id>Q9Y6D9</id>
        <label>MAD1L1</label>
    </interactant>
    <organismsDiffer>false</organismsDiffer>
    <experiments>6</experiments>
</comment>
<comment type="interaction">
    <interactant intactId="EBI-1048159">
        <id>P55081</id>
    </interactant>
    <interactant intactId="EBI-348259">
        <id>Q96EZ8</id>
        <label>MCRS1</label>
    </interactant>
    <organismsDiffer>false</organismsDiffer>
    <experiments>3</experiments>
</comment>
<comment type="interaction">
    <interactant intactId="EBI-1048159">
        <id>P55081</id>
    </interactant>
    <interactant intactId="EBI-10172526">
        <id>Q9UJV3-2</id>
        <label>MID2</label>
    </interactant>
    <organismsDiffer>false</organismsDiffer>
    <experiments>6</experiments>
</comment>
<comment type="interaction">
    <interactant intactId="EBI-1048159">
        <id>P55081</id>
    </interactant>
    <interactant intactId="EBI-2548751">
        <id>Q8TD10</id>
        <label>MIPOL1</label>
    </interactant>
    <organismsDiffer>false</organismsDiffer>
    <experiments>3</experiments>
</comment>
<comment type="interaction">
    <interactant intactId="EBI-1048159">
        <id>P55081</id>
    </interactant>
    <interactant intactId="EBI-742948">
        <id>Q5JR59</id>
        <label>MTUS2</label>
    </interactant>
    <organismsDiffer>false</organismsDiffer>
    <experiments>3</experiments>
</comment>
<comment type="interaction">
    <interactant intactId="EBI-1048159">
        <id>P55081</id>
    </interactant>
    <interactant intactId="EBI-715849">
        <id>O14777</id>
        <label>NDC80</label>
    </interactant>
    <organismsDiffer>false</organismsDiffer>
    <experiments>3</experiments>
</comment>
<comment type="interaction">
    <interactant intactId="EBI-1048159">
        <id>P55081</id>
    </interactant>
    <interactant intactId="EBI-9995414">
        <id>Q8NEJ9</id>
        <label>NGDN</label>
    </interactant>
    <organismsDiffer>false</organismsDiffer>
    <experiments>3</experiments>
</comment>
<comment type="interaction">
    <interactant intactId="EBI-1048159">
        <id>P55081</id>
    </interactant>
    <interactant intactId="EBI-10225049">
        <id>Q7RTU3</id>
        <label>OLIG3</label>
    </interactant>
    <organismsDiffer>false</organismsDiffer>
    <experiments>3</experiments>
</comment>
<comment type="interaction">
    <interactant intactId="EBI-1048159">
        <id>P55081</id>
    </interactant>
    <interactant intactId="EBI-747278">
        <id>P26367</id>
        <label>PAX6</label>
    </interactant>
    <organismsDiffer>false</organismsDiffer>
    <experiments>3</experiments>
</comment>
<comment type="interaction">
    <interactant intactId="EBI-1048159">
        <id>P55081</id>
    </interactant>
    <interactant intactId="EBI-713786">
        <id>Q8IXK0</id>
        <label>PHC2</label>
    </interactant>
    <organismsDiffer>false</organismsDiffer>
    <experiments>3</experiments>
</comment>
<comment type="interaction">
    <interactant intactId="EBI-1048159">
        <id>P55081</id>
    </interactant>
    <interactant intactId="EBI-14066006">
        <id>Q4G0R1</id>
        <label>PIBF1</label>
    </interactant>
    <organismsDiffer>false</organismsDiffer>
    <experiments>3</experiments>
</comment>
<comment type="interaction">
    <interactant intactId="EBI-1048159">
        <id>P55081</id>
    </interactant>
    <interactant intactId="EBI-357318">
        <id>Q9NWS0</id>
        <label>PIH1D1</label>
    </interactant>
    <organismsDiffer>false</organismsDiffer>
    <experiments>3</experiments>
</comment>
<comment type="interaction">
    <interactant intactId="EBI-1048159">
        <id>P55081</id>
    </interactant>
    <interactant intactId="EBI-721782">
        <id>Q96BK5</id>
        <label>PINX1</label>
    </interactant>
    <organismsDiffer>false</organismsDiffer>
    <experiments>3</experiments>
</comment>
<comment type="interaction">
    <interactant intactId="EBI-1048159">
        <id>P55081</id>
    </interactant>
    <interactant intactId="EBI-742388">
        <id>Q9H8W4</id>
        <label>PLEKHF2</label>
    </interactant>
    <organismsDiffer>false</organismsDiffer>
    <experiments>3</experiments>
</comment>
<comment type="interaction">
    <interactant intactId="EBI-1048159">
        <id>P55081</id>
    </interactant>
    <interactant intactId="EBI-744322">
        <id>O43395</id>
        <label>PRPF3</label>
    </interactant>
    <organismsDiffer>false</organismsDiffer>
    <experiments>2</experiments>
</comment>
<comment type="interaction">
    <interactant intactId="EBI-1048159">
        <id>P55081</id>
    </interactant>
    <interactant intactId="EBI-715374">
        <id>Q8NAV1</id>
        <label>PRPF38A</label>
    </interactant>
    <organismsDiffer>false</organismsDiffer>
    <experiments>3</experiments>
</comment>
<comment type="interaction">
    <interactant intactId="EBI-1048159">
        <id>P55081</id>
    </interactant>
    <interactant intactId="EBI-749336">
        <id>Q8TAD8</id>
        <label>SNIP1</label>
    </interactant>
    <organismsDiffer>false</organismsDiffer>
    <experiments>4</experiments>
</comment>
<comment type="interaction">
    <interactant intactId="EBI-1048159">
        <id>P55081</id>
    </interactant>
    <interactant intactId="EBI-2212028">
        <id>Q9Y2D8</id>
        <label>SSX2IP</label>
    </interactant>
    <organismsDiffer>false</organismsDiffer>
    <experiments>3</experiments>
</comment>
<comment type="interaction">
    <interactant intactId="EBI-1048159">
        <id>P55081</id>
    </interactant>
    <interactant intactId="EBI-745680">
        <id>Q96MF2</id>
        <label>STAC3</label>
    </interactant>
    <organismsDiffer>false</organismsDiffer>
    <experiments>3</experiments>
</comment>
<comment type="interaction">
    <interactant intactId="EBI-1048159">
        <id>P55081</id>
    </interactant>
    <interactant intactId="EBI-714135">
        <id>O75558</id>
        <label>STX11</label>
    </interactant>
    <organismsDiffer>false</organismsDiffer>
    <experiments>3</experiments>
</comment>
<comment type="interaction">
    <interactant intactId="EBI-1048159">
        <id>P55081</id>
    </interactant>
    <interactant intactId="EBI-742268">
        <id>O75478</id>
        <label>TADA2A</label>
    </interactant>
    <organismsDiffer>false</organismsDiffer>
    <experiments>3</experiments>
</comment>
<comment type="interaction">
    <interactant intactId="EBI-1048159">
        <id>P55081</id>
    </interactant>
    <interactant intactId="EBI-3923210">
        <id>Q8TDR4</id>
        <label>TCP10L</label>
    </interactant>
    <organismsDiffer>false</organismsDiffer>
    <experiments>3</experiments>
</comment>
<comment type="interaction">
    <interactant intactId="EBI-1048159">
        <id>P55081</id>
    </interactant>
    <interactant intactId="EBI-11139477">
        <id>Q96N21</id>
        <label>TEPSIN</label>
    </interactant>
    <organismsDiffer>false</organismsDiffer>
    <experiments>3</experiments>
</comment>
<comment type="interaction">
    <interactant intactId="EBI-1048159">
        <id>P55081</id>
    </interactant>
    <interactant intactId="EBI-1105213">
        <id>Q9UBB9</id>
        <label>TFIP11</label>
    </interactant>
    <organismsDiffer>false</organismsDiffer>
    <experiments>3</experiments>
</comment>
<comment type="interaction">
    <interactant intactId="EBI-1048159">
        <id>P55081</id>
    </interactant>
    <interactant intactId="EBI-741515">
        <id>Q9NVV9</id>
        <label>THAP1</label>
    </interactant>
    <organismsDiffer>false</organismsDiffer>
    <experiments>3</experiments>
</comment>
<comment type="interaction">
    <interactant intactId="EBI-1048159">
        <id>P55081</id>
    </interactant>
    <interactant intactId="EBI-717810">
        <id>Q08117</id>
        <label>TLE5</label>
    </interactant>
    <organismsDiffer>false</organismsDiffer>
    <experiments>3</experiments>
</comment>
<comment type="interaction">
    <interactant intactId="EBI-1048159">
        <id>P55081</id>
    </interactant>
    <interactant intactId="EBI-11741437">
        <id>Q08117-2</id>
        <label>TLE5</label>
    </interactant>
    <organismsDiffer>false</organismsDiffer>
    <experiments>5</experiments>
</comment>
<comment type="interaction">
    <interactant intactId="EBI-1048159">
        <id>P55081</id>
    </interactant>
    <interactant intactId="EBI-746692">
        <id>P19237</id>
        <label>TNNI1</label>
    </interactant>
    <organismsDiffer>false</organismsDiffer>
    <experiments>3</experiments>
</comment>
<comment type="interaction">
    <interactant intactId="EBI-1048159">
        <id>P55081</id>
    </interactant>
    <interactant intactId="EBI-355744">
        <id>Q12933</id>
        <label>TRAF2</label>
    </interactant>
    <organismsDiffer>false</organismsDiffer>
    <experiments>3</experiments>
</comment>
<comment type="interaction">
    <interactant intactId="EBI-1048159">
        <id>P55081</id>
    </interactant>
    <interactant intactId="EBI-725997">
        <id>Q8WV44</id>
        <label>TRIM41</label>
    </interactant>
    <organismsDiffer>false</organismsDiffer>
    <experiments>3</experiments>
</comment>
<comment type="interaction">
    <interactant intactId="EBI-1048159">
        <id>P55081</id>
    </interactant>
    <interactant intactId="EBI-5235829">
        <id>Q8IWZ5</id>
        <label>TRIM42</label>
    </interactant>
    <organismsDiffer>false</organismsDiffer>
    <experiments>3</experiments>
</comment>
<comment type="interaction">
    <interactant intactId="EBI-1048159">
        <id>P55081</id>
    </interactant>
    <interactant intactId="EBI-2130429">
        <id>Q9BYV2</id>
        <label>TRIM54</label>
    </interactant>
    <organismsDiffer>false</organismsDiffer>
    <experiments>6</experiments>
</comment>
<comment type="interaction">
    <interactant intactId="EBI-1048159">
        <id>P55081</id>
    </interactant>
    <interactant intactId="EBI-9090990">
        <id>Q5W5X9-3</id>
        <label>TTC23</label>
    </interactant>
    <organismsDiffer>false</organismsDiffer>
    <experiments>3</experiments>
</comment>
<comment type="interaction">
    <interactant intactId="EBI-1048159">
        <id>P55081</id>
    </interactant>
    <interactant intactId="EBI-2799833">
        <id>Q8N1B4</id>
        <label>VPS52</label>
    </interactant>
    <organismsDiffer>false</organismsDiffer>
    <experiments>6</experiments>
</comment>
<comment type="interaction">
    <interactant intactId="EBI-1048159">
        <id>P55081</id>
    </interactant>
    <interactant intactId="EBI-2682961">
        <id>Q9Y2K1</id>
        <label>ZBTB1</label>
    </interactant>
    <organismsDiffer>false</organismsDiffer>
    <experiments>3</experiments>
</comment>
<comment type="interaction">
    <interactant intactId="EBI-1048159">
        <id>P55081</id>
    </interactant>
    <interactant intactId="EBI-10176632">
        <id>O43829</id>
        <label>ZBTB14</label>
    </interactant>
    <organismsDiffer>false</organismsDiffer>
    <experiments>3</experiments>
</comment>
<comment type="interaction">
    <interactant intactId="EBI-1048159">
        <id>P55081</id>
    </interactant>
    <interactant intactId="EBI-742740">
        <id>Q96BR9</id>
        <label>ZBTB8A</label>
    </interactant>
    <organismsDiffer>false</organismsDiffer>
    <experiments>3</experiments>
</comment>
<comment type="interaction">
    <interactant intactId="EBI-1048159">
        <id>P55081</id>
    </interactant>
    <interactant intactId="EBI-2555749">
        <id>Q6P2D0</id>
        <label>ZFP1</label>
    </interactant>
    <organismsDiffer>false</organismsDiffer>
    <experiments>3</experiments>
</comment>
<comment type="interaction">
    <interactant intactId="EBI-1048159">
        <id>P55081</id>
    </interactant>
    <interactant intactId="EBI-12224489">
        <id>Q8N8Y5</id>
        <label>ZFP41</label>
    </interactant>
    <organismsDiffer>false</organismsDiffer>
    <experiments>3</experiments>
</comment>
<comment type="interaction">
    <interactant intactId="EBI-1048159">
        <id>P55081</id>
    </interactant>
    <interactant intactId="EBI-711679">
        <id>Q9NTW7</id>
        <label>ZFP64</label>
    </interactant>
    <organismsDiffer>false</organismsDiffer>
    <experiments>3</experiments>
</comment>
<comment type="interaction">
    <interactant intactId="EBI-1048159">
        <id>P55081</id>
    </interactant>
    <interactant intactId="EBI-18054945">
        <id>P52741</id>
        <label>ZNF134</label>
    </interactant>
    <organismsDiffer>false</organismsDiffer>
    <experiments>3</experiments>
</comment>
<comment type="interaction">
    <interactant intactId="EBI-1048159">
        <id>P55081</id>
    </interactant>
    <interactant intactId="EBI-1640204">
        <id>Q9UDV6</id>
        <label>ZNF212</label>
    </interactant>
    <organismsDiffer>false</organismsDiffer>
    <experiments>3</experiments>
</comment>
<comment type="interaction">
    <interactant intactId="EBI-1048159">
        <id>P55081</id>
    </interactant>
    <interactant intactId="EBI-8643207">
        <id>Q8TD17</id>
        <label>ZNF398</label>
    </interactant>
    <organismsDiffer>false</organismsDiffer>
    <experiments>7</experiments>
</comment>
<comment type="interaction">
    <interactant intactId="EBI-1048159">
        <id>P55081</id>
    </interactant>
    <interactant intactId="EBI-12700258">
        <id>P51814-6</id>
        <label>ZNF41</label>
    </interactant>
    <organismsDiffer>false</organismsDiffer>
    <experiments>3</experiments>
</comment>
<comment type="interaction">
    <interactant intactId="EBI-1048159">
        <id>P55081</id>
    </interactant>
    <interactant intactId="EBI-373363">
        <id>Q96NG5</id>
        <label>ZNF558</label>
    </interactant>
    <organismsDiffer>false</organismsDiffer>
    <experiments>3</experiments>
</comment>
<comment type="interaction">
    <interactant intactId="EBI-1048159">
        <id>P55081</id>
    </interactant>
    <interactant intactId="EBI-4395669">
        <id>Q6ZNG0</id>
        <label>ZNF620</label>
    </interactant>
    <organismsDiffer>false</organismsDiffer>
    <experiments>3</experiments>
</comment>
<comment type="interaction">
    <interactant intactId="EBI-1048159">
        <id>P55081</id>
    </interactant>
    <interactant intactId="EBI-7138235">
        <id>Q9NQZ8</id>
        <label>ZNF71</label>
    </interactant>
    <organismsDiffer>false</organismsDiffer>
    <experiments>3</experiments>
</comment>
<comment type="interaction">
    <interactant intactId="EBI-1048159">
        <id>P55081</id>
    </interactant>
    <interactant intactId="EBI-7254550">
        <id>P36508</id>
        <label>ZNF76</label>
    </interactant>
    <organismsDiffer>false</organismsDiffer>
    <experiments>3</experiments>
</comment>
<comment type="interaction">
    <interactant intactId="EBI-1048159">
        <id>P55081</id>
    </interactant>
    <interactant intactId="EBI-527853">
        <id>Q9UGI0</id>
        <label>ZRANB1</label>
    </interactant>
    <organismsDiffer>false</organismsDiffer>
    <experiments>3</experiments>
</comment>
<comment type="interaction">
    <interactant intactId="EBI-1048159">
        <id>P55081</id>
    </interactant>
    <interactant intactId="EBI-12270264">
        <id>Q15695</id>
        <label>ZRSR2P1</label>
    </interactant>
    <organismsDiffer>false</organismsDiffer>
    <experiments>3</experiments>
</comment>
<comment type="subcellular location">
    <subcellularLocation>
        <location evidence="4">Nucleus</location>
    </subcellularLocation>
</comment>
<comment type="similarity">
    <text evidence="6">Belongs to the MFAP1 family.</text>
</comment>
<dbReference type="EMBL" id="U04209">
    <property type="protein sequence ID" value="AAA92786.1"/>
    <property type="molecule type" value="mRNA"/>
</dbReference>
<dbReference type="EMBL" id="AK312867">
    <property type="protein sequence ID" value="BAG35719.1"/>
    <property type="molecule type" value="mRNA"/>
</dbReference>
<dbReference type="EMBL" id="AC018512">
    <property type="status" value="NOT_ANNOTATED_CDS"/>
    <property type="molecule type" value="Genomic_DNA"/>
</dbReference>
<dbReference type="EMBL" id="CH471082">
    <property type="protein sequence ID" value="EAW77247.1"/>
    <property type="molecule type" value="Genomic_DNA"/>
</dbReference>
<dbReference type="EMBL" id="BC023557">
    <property type="protein sequence ID" value="AAH23557.1"/>
    <property type="molecule type" value="mRNA"/>
</dbReference>
<dbReference type="EMBL" id="BC050742">
    <property type="protein sequence ID" value="AAH50742.1"/>
    <property type="molecule type" value="mRNA"/>
</dbReference>
<dbReference type="CCDS" id="CCDS10105.1"/>
<dbReference type="PIR" id="A55565">
    <property type="entry name" value="A55565"/>
</dbReference>
<dbReference type="RefSeq" id="NP_005917.2">
    <property type="nucleotide sequence ID" value="NM_005926.3"/>
</dbReference>
<dbReference type="PDB" id="5F5S">
    <property type="method" value="X-ray"/>
    <property type="resolution" value="2.40 A"/>
    <property type="chains" value="B=267-344"/>
</dbReference>
<dbReference type="PDB" id="5O9Z">
    <property type="method" value="EM"/>
    <property type="resolution" value="4.50 A"/>
    <property type="chains" value="K=1-439"/>
</dbReference>
<dbReference type="PDB" id="6AHD">
    <property type="method" value="EM"/>
    <property type="resolution" value="3.80 A"/>
    <property type="chains" value="0=1-439"/>
</dbReference>
<dbReference type="PDB" id="7AAV">
    <property type="method" value="EM"/>
    <property type="resolution" value="4.20 A"/>
    <property type="chains" value="K=1-439"/>
</dbReference>
<dbReference type="PDB" id="7ABF">
    <property type="method" value="EM"/>
    <property type="resolution" value="3.90 A"/>
    <property type="chains" value="K=1-439"/>
</dbReference>
<dbReference type="PDB" id="7ABG">
    <property type="method" value="EM"/>
    <property type="resolution" value="7.80 A"/>
    <property type="chains" value="K=1-439"/>
</dbReference>
<dbReference type="PDB" id="7ABI">
    <property type="method" value="EM"/>
    <property type="resolution" value="8.00 A"/>
    <property type="chains" value="K=1-439"/>
</dbReference>
<dbReference type="PDB" id="8H6K">
    <property type="method" value="EM"/>
    <property type="resolution" value="2.70 A"/>
    <property type="chains" value="4K=1-439"/>
</dbReference>
<dbReference type="PDB" id="8Q7N">
    <property type="method" value="EM"/>
    <property type="resolution" value="3.10 A"/>
    <property type="chains" value="K=1-439"/>
</dbReference>
<dbReference type="PDB" id="8QO9">
    <property type="method" value="EM"/>
    <property type="resolution" value="5.29 A"/>
    <property type="chains" value="K=1-439"/>
</dbReference>
<dbReference type="PDB" id="8QPE">
    <property type="method" value="EM"/>
    <property type="resolution" value="3.10 A"/>
    <property type="chains" value="K=1-439"/>
</dbReference>
<dbReference type="PDB" id="8QZS">
    <property type="method" value="EM"/>
    <property type="resolution" value="4.10 A"/>
    <property type="chains" value="K=1-439"/>
</dbReference>
<dbReference type="PDBsum" id="5F5S"/>
<dbReference type="PDBsum" id="5O9Z"/>
<dbReference type="PDBsum" id="6AHD"/>
<dbReference type="PDBsum" id="7AAV"/>
<dbReference type="PDBsum" id="7ABF"/>
<dbReference type="PDBsum" id="7ABG"/>
<dbReference type="PDBsum" id="7ABI"/>
<dbReference type="PDBsum" id="8H6K"/>
<dbReference type="PDBsum" id="8Q7N"/>
<dbReference type="PDBsum" id="8QO9"/>
<dbReference type="PDBsum" id="8QPE"/>
<dbReference type="PDBsum" id="8QZS"/>
<dbReference type="EMDB" id="EMD-11693"/>
<dbReference type="EMDB" id="EMD-11694"/>
<dbReference type="EMDB" id="EMD-11695"/>
<dbReference type="EMDB" id="EMD-11697"/>
<dbReference type="EMDB" id="EMD-18225"/>
<dbReference type="EMDB" id="EMD-18529"/>
<dbReference type="EMDB" id="EMD-18548"/>
<dbReference type="EMDB" id="EMD-18781"/>
<dbReference type="EMDB" id="EMD-34507"/>
<dbReference type="EMDB" id="EMD-3766"/>
<dbReference type="EMDB" id="EMD-9624"/>
<dbReference type="SMR" id="P55081"/>
<dbReference type="BioGRID" id="110394">
    <property type="interactions" value="310"/>
</dbReference>
<dbReference type="CORUM" id="P55081"/>
<dbReference type="FunCoup" id="P55081">
    <property type="interactions" value="2124"/>
</dbReference>
<dbReference type="IntAct" id="P55081">
    <property type="interactions" value="175"/>
</dbReference>
<dbReference type="MINT" id="P55081"/>
<dbReference type="STRING" id="9606.ENSP00000267812"/>
<dbReference type="GlyGen" id="P55081">
    <property type="glycosylation" value="3 sites, 1 N-linked glycan (1 site), 1 O-linked glycan (1 site)"/>
</dbReference>
<dbReference type="iPTMnet" id="P55081"/>
<dbReference type="PhosphoSitePlus" id="P55081"/>
<dbReference type="BioMuta" id="MFAP1"/>
<dbReference type="DMDM" id="205831094"/>
<dbReference type="jPOST" id="P55081"/>
<dbReference type="MassIVE" id="P55081"/>
<dbReference type="PaxDb" id="9606-ENSP00000267812"/>
<dbReference type="PeptideAtlas" id="P55081"/>
<dbReference type="ProteomicsDB" id="56782"/>
<dbReference type="Pumba" id="P55081"/>
<dbReference type="TopDownProteomics" id="P55081"/>
<dbReference type="Antibodypedia" id="24163">
    <property type="antibodies" value="131 antibodies from 23 providers"/>
</dbReference>
<dbReference type="DNASU" id="4236"/>
<dbReference type="Ensembl" id="ENST00000267812.4">
    <property type="protein sequence ID" value="ENSP00000267812.3"/>
    <property type="gene ID" value="ENSG00000140259.7"/>
</dbReference>
<dbReference type="GeneID" id="4236"/>
<dbReference type="KEGG" id="hsa:4236"/>
<dbReference type="MANE-Select" id="ENST00000267812.4">
    <property type="protein sequence ID" value="ENSP00000267812.3"/>
    <property type="RefSeq nucleotide sequence ID" value="NM_005926.3"/>
    <property type="RefSeq protein sequence ID" value="NP_005917.2"/>
</dbReference>
<dbReference type="UCSC" id="uc001zth.2">
    <property type="organism name" value="human"/>
</dbReference>
<dbReference type="AGR" id="HGNC:7032"/>
<dbReference type="CTD" id="4236"/>
<dbReference type="DisGeNET" id="4236"/>
<dbReference type="GeneCards" id="MFAP1"/>
<dbReference type="HGNC" id="HGNC:7032">
    <property type="gene designation" value="MFAP1"/>
</dbReference>
<dbReference type="HPA" id="ENSG00000140259">
    <property type="expression patterns" value="Low tissue specificity"/>
</dbReference>
<dbReference type="MIM" id="600215">
    <property type="type" value="gene"/>
</dbReference>
<dbReference type="neXtProt" id="NX_P55081"/>
<dbReference type="OpenTargets" id="ENSG00000140259"/>
<dbReference type="PharmGKB" id="PA30768"/>
<dbReference type="VEuPathDB" id="HostDB:ENSG00000140259"/>
<dbReference type="eggNOG" id="KOG1425">
    <property type="taxonomic scope" value="Eukaryota"/>
</dbReference>
<dbReference type="GeneTree" id="ENSGT00690000102225"/>
<dbReference type="HOGENOM" id="CLU_023077_1_0_1"/>
<dbReference type="InParanoid" id="P55081"/>
<dbReference type="OMA" id="FHNERAG"/>
<dbReference type="OrthoDB" id="1111734at2759"/>
<dbReference type="PAN-GO" id="P55081">
    <property type="GO annotations" value="2 GO annotations based on evolutionary models"/>
</dbReference>
<dbReference type="PhylomeDB" id="P55081"/>
<dbReference type="TreeFam" id="TF314398"/>
<dbReference type="PathwayCommons" id="P55081"/>
<dbReference type="Reactome" id="R-HSA-72163">
    <property type="pathway name" value="mRNA Splicing - Major Pathway"/>
</dbReference>
<dbReference type="SignaLink" id="P55081"/>
<dbReference type="BioGRID-ORCS" id="4236">
    <property type="hits" value="827 hits in 1182 CRISPR screens"/>
</dbReference>
<dbReference type="CD-CODE" id="DEE660B4">
    <property type="entry name" value="Stress granule"/>
</dbReference>
<dbReference type="ChiTaRS" id="MFAP1">
    <property type="organism name" value="human"/>
</dbReference>
<dbReference type="GeneWiki" id="MFAP1"/>
<dbReference type="GenomeRNAi" id="4236"/>
<dbReference type="Pharos" id="P55081">
    <property type="development level" value="Tbio"/>
</dbReference>
<dbReference type="PRO" id="PR:P55081"/>
<dbReference type="Proteomes" id="UP000005640">
    <property type="component" value="Chromosome 15"/>
</dbReference>
<dbReference type="RNAct" id="P55081">
    <property type="molecule type" value="protein"/>
</dbReference>
<dbReference type="Bgee" id="ENSG00000140259">
    <property type="expression patterns" value="Expressed in secondary oocyte and 207 other cell types or tissues"/>
</dbReference>
<dbReference type="GO" id="GO:0005813">
    <property type="term" value="C:centrosome"/>
    <property type="evidence" value="ECO:0000314"/>
    <property type="project" value="HPA"/>
</dbReference>
<dbReference type="GO" id="GO:0001527">
    <property type="term" value="C:microfibril"/>
    <property type="evidence" value="ECO:0000314"/>
    <property type="project" value="UniProtKB"/>
</dbReference>
<dbReference type="GO" id="GO:0005654">
    <property type="term" value="C:nucleoplasm"/>
    <property type="evidence" value="ECO:0000314"/>
    <property type="project" value="HPA"/>
</dbReference>
<dbReference type="GO" id="GO:0005634">
    <property type="term" value="C:nucleus"/>
    <property type="evidence" value="ECO:0000314"/>
    <property type="project" value="UniProtKB"/>
</dbReference>
<dbReference type="GO" id="GO:0071005">
    <property type="term" value="C:U2-type precatalytic spliceosome"/>
    <property type="evidence" value="ECO:0000314"/>
    <property type="project" value="UniProtKB"/>
</dbReference>
<dbReference type="GO" id="GO:0005684">
    <property type="term" value="C:U2-type spliceosomal complex"/>
    <property type="evidence" value="ECO:0000318"/>
    <property type="project" value="GO_Central"/>
</dbReference>
<dbReference type="GO" id="GO:0003723">
    <property type="term" value="F:RNA binding"/>
    <property type="evidence" value="ECO:0007005"/>
    <property type="project" value="UniProtKB"/>
</dbReference>
<dbReference type="GO" id="GO:0000398">
    <property type="term" value="P:mRNA splicing, via spliceosome"/>
    <property type="evidence" value="ECO:0000314"/>
    <property type="project" value="UniProtKB"/>
</dbReference>
<dbReference type="InterPro" id="IPR033194">
    <property type="entry name" value="MFAP1"/>
</dbReference>
<dbReference type="InterPro" id="IPR009730">
    <property type="entry name" value="MFAP1_C"/>
</dbReference>
<dbReference type="PANTHER" id="PTHR15327">
    <property type="entry name" value="MICROFIBRIL-ASSOCIATED PROTEIN"/>
    <property type="match status" value="1"/>
</dbReference>
<dbReference type="Pfam" id="PF06991">
    <property type="entry name" value="MFAP1"/>
    <property type="match status" value="1"/>
</dbReference>
<name>MFAP1_HUMAN</name>
<proteinExistence type="evidence at protein level"/>
<feature type="initiator methionine" description="Removed" evidence="18 19">
    <location>
        <position position="1"/>
    </location>
</feature>
<feature type="chain" id="PRO_0000096458" description="Microfibrillar-associated protein 1">
    <location>
        <begin position="2"/>
        <end position="439"/>
    </location>
</feature>
<feature type="region of interest" description="Disordered" evidence="1">
    <location>
        <begin position="1"/>
        <end position="27"/>
    </location>
</feature>
<feature type="region of interest" description="Disordered" evidence="1">
    <location>
        <begin position="39"/>
        <end position="200"/>
    </location>
</feature>
<feature type="compositionally biased region" description="Basic and acidic residues" evidence="1">
    <location>
        <begin position="61"/>
        <end position="70"/>
    </location>
</feature>
<feature type="compositionally biased region" description="Acidic residues" evidence="1">
    <location>
        <begin position="71"/>
        <end position="81"/>
    </location>
</feature>
<feature type="compositionally biased region" description="Acidic residues" evidence="1">
    <location>
        <begin position="112"/>
        <end position="122"/>
    </location>
</feature>
<feature type="compositionally biased region" description="Acidic residues" evidence="1">
    <location>
        <begin position="131"/>
        <end position="144"/>
    </location>
</feature>
<feature type="compositionally biased region" description="Basic and acidic residues" evidence="1">
    <location>
        <begin position="145"/>
        <end position="163"/>
    </location>
</feature>
<feature type="compositionally biased region" description="Acidic residues" evidence="1">
    <location>
        <begin position="178"/>
        <end position="195"/>
    </location>
</feature>
<feature type="modified residue" description="N-acetylserine" evidence="18 19">
    <location>
        <position position="2"/>
    </location>
</feature>
<feature type="modified residue" description="Phosphoserine" evidence="13 15 16 17 20">
    <location>
        <position position="52"/>
    </location>
</feature>
<feature type="modified residue" description="Phosphoserine" evidence="13 15 16 17 20 21">
    <location>
        <position position="53"/>
    </location>
</feature>
<feature type="modified residue" description="Phosphoserine" evidence="20">
    <location>
        <position position="94"/>
    </location>
</feature>
<feature type="modified residue" description="Phosphoserine" evidence="10 11 12 14 15 16 17 20 21">
    <location>
        <position position="116"/>
    </location>
</feature>
<feature type="modified residue" description="Phosphoserine" evidence="10 11 12 14 16 17 20 21">
    <location>
        <position position="118"/>
    </location>
</feature>
<feature type="modified residue" description="Phosphoserine" evidence="10 15 16 17 20">
    <location>
        <position position="132"/>
    </location>
</feature>
<feature type="modified residue" description="Phosphoserine" evidence="10 16 17 20">
    <location>
        <position position="133"/>
    </location>
</feature>
<feature type="modified residue" description="Phosphothreonine" evidence="10 11 12 13 14 15 16 17 20 21">
    <location>
        <position position="267"/>
    </location>
</feature>
<feature type="modified residue" description="Phosphoserine" evidence="20">
    <location>
        <position position="361"/>
    </location>
</feature>
<feature type="modified residue" description="Phosphoserine" evidence="20">
    <location>
        <position position="432"/>
    </location>
</feature>
<feature type="cross-link" description="Glycyl lysine isopeptide (Lys-Gly) (interchain with G-Cter in SUMO2)" evidence="23">
    <location>
        <position position="67"/>
    </location>
</feature>
<feature type="cross-link" description="Glycyl lysine isopeptide (Lys-Gly) (interchain with G-Cter in SUMO2)" evidence="22 23">
    <location>
        <position position="249"/>
    </location>
</feature>
<feature type="cross-link" description="Glycyl lysine isopeptide (Lys-Gly) (interchain with G-Cter in SUMO2)" evidence="23">
    <location>
        <position position="357"/>
    </location>
</feature>
<feature type="cross-link" description="Glycyl lysine isopeptide (Lys-Gly) (interchain with G-Cter in SUMO2)" evidence="23">
    <location>
        <position position="371"/>
    </location>
</feature>
<feature type="cross-link" description="Glycyl lysine isopeptide (Lys-Gly) (interchain with G-Cter in SUMO2)" evidence="23">
    <location>
        <position position="381"/>
    </location>
</feature>
<feature type="cross-link" description="Glycyl lysine isopeptide (Lys-Gly) (interchain with G-Cter in SUMO2)" evidence="23">
    <location>
        <position position="415"/>
    </location>
</feature>
<feature type="cross-link" description="Glycyl lysine isopeptide (Lys-Gly) (interchain with G-Cter in SUMO2)" evidence="23">
    <location>
        <position position="418"/>
    </location>
</feature>
<feature type="sequence conflict" description="In Ref. 1; AAA92786." evidence="6" ref="1">
    <original>K</original>
    <variation>Q</variation>
    <location>
        <position position="238"/>
    </location>
</feature>
<feature type="sequence conflict" description="In Ref. 1; AAA92786." evidence="6" ref="1">
    <original>K</original>
    <variation>Q</variation>
    <location>
        <position position="242"/>
    </location>
</feature>
<feature type="sequence conflict" description="In Ref. 1; AAA92786." evidence="6" ref="1">
    <original>E</original>
    <variation>G</variation>
    <location>
        <position position="245"/>
    </location>
</feature>
<feature type="sequence conflict" description="In Ref. 1; AAA92786." evidence="6" ref="1">
    <original>K</original>
    <variation>P</variation>
    <location>
        <position position="249"/>
    </location>
</feature>
<feature type="helix" evidence="24">
    <location>
        <begin position="273"/>
        <end position="321"/>
    </location>
</feature>
<feature type="strand" evidence="25">
    <location>
        <begin position="346"/>
        <end position="348"/>
    </location>
</feature>
<feature type="helix" evidence="25">
    <location>
        <begin position="354"/>
        <end position="357"/>
    </location>
</feature>
<feature type="turn" evidence="25">
    <location>
        <begin position="365"/>
        <end position="367"/>
    </location>
</feature>
<feature type="turn" evidence="25">
    <location>
        <begin position="376"/>
        <end position="378"/>
    </location>
</feature>
<feature type="strand" evidence="25">
    <location>
        <begin position="379"/>
        <end position="382"/>
    </location>
</feature>
<feature type="strand" evidence="25">
    <location>
        <begin position="394"/>
        <end position="397"/>
    </location>
</feature>
<evidence type="ECO:0000256" key="1">
    <source>
        <dbReference type="SAM" id="MobiDB-lite"/>
    </source>
</evidence>
<evidence type="ECO:0000269" key="2">
    <source>
    </source>
</evidence>
<evidence type="ECO:0000269" key="3">
    <source>
    </source>
</evidence>
<evidence type="ECO:0000269" key="4">
    <source>
    </source>
</evidence>
<evidence type="ECO:0000303" key="5">
    <source>
    </source>
</evidence>
<evidence type="ECO:0000305" key="6"/>
<evidence type="ECO:0000312" key="7">
    <source>
        <dbReference type="HGNC" id="HGNC:7032"/>
    </source>
</evidence>
<evidence type="ECO:0007744" key="8">
    <source>
        <dbReference type="PDB" id="5F5S"/>
    </source>
</evidence>
<evidence type="ECO:0007744" key="9">
    <source>
        <dbReference type="PDB" id="5O9Z"/>
    </source>
</evidence>
<evidence type="ECO:0007744" key="10">
    <source>
    </source>
</evidence>
<evidence type="ECO:0007744" key="11">
    <source>
    </source>
</evidence>
<evidence type="ECO:0007744" key="12">
    <source>
    </source>
</evidence>
<evidence type="ECO:0007744" key="13">
    <source>
    </source>
</evidence>
<evidence type="ECO:0007744" key="14">
    <source>
    </source>
</evidence>
<evidence type="ECO:0007744" key="15">
    <source>
    </source>
</evidence>
<evidence type="ECO:0007744" key="16">
    <source>
    </source>
</evidence>
<evidence type="ECO:0007744" key="17">
    <source>
    </source>
</evidence>
<evidence type="ECO:0007744" key="18">
    <source>
    </source>
</evidence>
<evidence type="ECO:0007744" key="19">
    <source>
    </source>
</evidence>
<evidence type="ECO:0007744" key="20">
    <source>
    </source>
</evidence>
<evidence type="ECO:0007744" key="21">
    <source>
    </source>
</evidence>
<evidence type="ECO:0007744" key="22">
    <source>
    </source>
</evidence>
<evidence type="ECO:0007744" key="23">
    <source>
    </source>
</evidence>
<evidence type="ECO:0007829" key="24">
    <source>
        <dbReference type="PDB" id="5F5S"/>
    </source>
</evidence>
<evidence type="ECO:0007829" key="25">
    <source>
        <dbReference type="PDB" id="8Q7N"/>
    </source>
</evidence>
<reference key="1">
    <citation type="journal article" date="1994" name="Genomics">
        <title>Structure of the human gene encoding the associated microfibrillar protein (MFAP1) and localization to chromosome 15q15-q21.</title>
        <authorList>
            <person name="Yeh H."/>
            <person name="Chow M."/>
            <person name="Abrams W.R."/>
            <person name="Fan J."/>
            <person name="Foster J."/>
            <person name="Mitchell H."/>
            <person name="Muenke M."/>
            <person name="Rosenbloom J."/>
        </authorList>
    </citation>
    <scope>NUCLEOTIDE SEQUENCE [MRNA]</scope>
    <source>
        <tissue>Skin</tissue>
    </source>
</reference>
<reference key="2">
    <citation type="journal article" date="2004" name="Nat. Genet.">
        <title>Complete sequencing and characterization of 21,243 full-length human cDNAs.</title>
        <authorList>
            <person name="Ota T."/>
            <person name="Suzuki Y."/>
            <person name="Nishikawa T."/>
            <person name="Otsuki T."/>
            <person name="Sugiyama T."/>
            <person name="Irie R."/>
            <person name="Wakamatsu A."/>
            <person name="Hayashi K."/>
            <person name="Sato H."/>
            <person name="Nagai K."/>
            <person name="Kimura K."/>
            <person name="Makita H."/>
            <person name="Sekine M."/>
            <person name="Obayashi M."/>
            <person name="Nishi T."/>
            <person name="Shibahara T."/>
            <person name="Tanaka T."/>
            <person name="Ishii S."/>
            <person name="Yamamoto J."/>
            <person name="Saito K."/>
            <person name="Kawai Y."/>
            <person name="Isono Y."/>
            <person name="Nakamura Y."/>
            <person name="Nagahari K."/>
            <person name="Murakami K."/>
            <person name="Yasuda T."/>
            <person name="Iwayanagi T."/>
            <person name="Wagatsuma M."/>
            <person name="Shiratori A."/>
            <person name="Sudo H."/>
            <person name="Hosoiri T."/>
            <person name="Kaku Y."/>
            <person name="Kodaira H."/>
            <person name="Kondo H."/>
            <person name="Sugawara M."/>
            <person name="Takahashi M."/>
            <person name="Kanda K."/>
            <person name="Yokoi T."/>
            <person name="Furuya T."/>
            <person name="Kikkawa E."/>
            <person name="Omura Y."/>
            <person name="Abe K."/>
            <person name="Kamihara K."/>
            <person name="Katsuta N."/>
            <person name="Sato K."/>
            <person name="Tanikawa M."/>
            <person name="Yamazaki M."/>
            <person name="Ninomiya K."/>
            <person name="Ishibashi T."/>
            <person name="Yamashita H."/>
            <person name="Murakawa K."/>
            <person name="Fujimori K."/>
            <person name="Tanai H."/>
            <person name="Kimata M."/>
            <person name="Watanabe M."/>
            <person name="Hiraoka S."/>
            <person name="Chiba Y."/>
            <person name="Ishida S."/>
            <person name="Ono Y."/>
            <person name="Takiguchi S."/>
            <person name="Watanabe S."/>
            <person name="Yosida M."/>
            <person name="Hotuta T."/>
            <person name="Kusano J."/>
            <person name="Kanehori K."/>
            <person name="Takahashi-Fujii A."/>
            <person name="Hara H."/>
            <person name="Tanase T.-O."/>
            <person name="Nomura Y."/>
            <person name="Togiya S."/>
            <person name="Komai F."/>
            <person name="Hara R."/>
            <person name="Takeuchi K."/>
            <person name="Arita M."/>
            <person name="Imose N."/>
            <person name="Musashino K."/>
            <person name="Yuuki H."/>
            <person name="Oshima A."/>
            <person name="Sasaki N."/>
            <person name="Aotsuka S."/>
            <person name="Yoshikawa Y."/>
            <person name="Matsunawa H."/>
            <person name="Ichihara T."/>
            <person name="Shiohata N."/>
            <person name="Sano S."/>
            <person name="Moriya S."/>
            <person name="Momiyama H."/>
            <person name="Satoh N."/>
            <person name="Takami S."/>
            <person name="Terashima Y."/>
            <person name="Suzuki O."/>
            <person name="Nakagawa S."/>
            <person name="Senoh A."/>
            <person name="Mizoguchi H."/>
            <person name="Goto Y."/>
            <person name="Shimizu F."/>
            <person name="Wakebe H."/>
            <person name="Hishigaki H."/>
            <person name="Watanabe T."/>
            <person name="Sugiyama A."/>
            <person name="Takemoto M."/>
            <person name="Kawakami B."/>
            <person name="Yamazaki M."/>
            <person name="Watanabe K."/>
            <person name="Kumagai A."/>
            <person name="Itakura S."/>
            <person name="Fukuzumi Y."/>
            <person name="Fujimori Y."/>
            <person name="Komiyama M."/>
            <person name="Tashiro H."/>
            <person name="Tanigami A."/>
            <person name="Fujiwara T."/>
            <person name="Ono T."/>
            <person name="Yamada K."/>
            <person name="Fujii Y."/>
            <person name="Ozaki K."/>
            <person name="Hirao M."/>
            <person name="Ohmori Y."/>
            <person name="Kawabata A."/>
            <person name="Hikiji T."/>
            <person name="Kobatake N."/>
            <person name="Inagaki H."/>
            <person name="Ikema Y."/>
            <person name="Okamoto S."/>
            <person name="Okitani R."/>
            <person name="Kawakami T."/>
            <person name="Noguchi S."/>
            <person name="Itoh T."/>
            <person name="Shigeta K."/>
            <person name="Senba T."/>
            <person name="Matsumura K."/>
            <person name="Nakajima Y."/>
            <person name="Mizuno T."/>
            <person name="Morinaga M."/>
            <person name="Sasaki M."/>
            <person name="Togashi T."/>
            <person name="Oyama M."/>
            <person name="Hata H."/>
            <person name="Watanabe M."/>
            <person name="Komatsu T."/>
            <person name="Mizushima-Sugano J."/>
            <person name="Satoh T."/>
            <person name="Shirai Y."/>
            <person name="Takahashi Y."/>
            <person name="Nakagawa K."/>
            <person name="Okumura K."/>
            <person name="Nagase T."/>
            <person name="Nomura N."/>
            <person name="Kikuchi H."/>
            <person name="Masuho Y."/>
            <person name="Yamashita R."/>
            <person name="Nakai K."/>
            <person name="Yada T."/>
            <person name="Nakamura Y."/>
            <person name="Ohara O."/>
            <person name="Isogai T."/>
            <person name="Sugano S."/>
        </authorList>
    </citation>
    <scope>NUCLEOTIDE SEQUENCE [LARGE SCALE MRNA]</scope>
    <source>
        <tissue>Trachea</tissue>
    </source>
</reference>
<reference key="3">
    <citation type="journal article" date="2006" name="Nature">
        <title>Analysis of the DNA sequence and duplication history of human chromosome 15.</title>
        <authorList>
            <person name="Zody M.C."/>
            <person name="Garber M."/>
            <person name="Sharpe T."/>
            <person name="Young S.K."/>
            <person name="Rowen L."/>
            <person name="O'Neill K."/>
            <person name="Whittaker C.A."/>
            <person name="Kamal M."/>
            <person name="Chang J.L."/>
            <person name="Cuomo C.A."/>
            <person name="Dewar K."/>
            <person name="FitzGerald M.G."/>
            <person name="Kodira C.D."/>
            <person name="Madan A."/>
            <person name="Qin S."/>
            <person name="Yang X."/>
            <person name="Abbasi N."/>
            <person name="Abouelleil A."/>
            <person name="Arachchi H.M."/>
            <person name="Baradarani L."/>
            <person name="Birditt B."/>
            <person name="Bloom S."/>
            <person name="Bloom T."/>
            <person name="Borowsky M.L."/>
            <person name="Burke J."/>
            <person name="Butler J."/>
            <person name="Cook A."/>
            <person name="DeArellano K."/>
            <person name="DeCaprio D."/>
            <person name="Dorris L. III"/>
            <person name="Dors M."/>
            <person name="Eichler E.E."/>
            <person name="Engels R."/>
            <person name="Fahey J."/>
            <person name="Fleetwood P."/>
            <person name="Friedman C."/>
            <person name="Gearin G."/>
            <person name="Hall J.L."/>
            <person name="Hensley G."/>
            <person name="Johnson E."/>
            <person name="Jones C."/>
            <person name="Kamat A."/>
            <person name="Kaur A."/>
            <person name="Locke D.P."/>
            <person name="Madan A."/>
            <person name="Munson G."/>
            <person name="Jaffe D.B."/>
            <person name="Lui A."/>
            <person name="Macdonald P."/>
            <person name="Mauceli E."/>
            <person name="Naylor J.W."/>
            <person name="Nesbitt R."/>
            <person name="Nicol R."/>
            <person name="O'Leary S.B."/>
            <person name="Ratcliffe A."/>
            <person name="Rounsley S."/>
            <person name="She X."/>
            <person name="Sneddon K.M.B."/>
            <person name="Stewart S."/>
            <person name="Sougnez C."/>
            <person name="Stone S.M."/>
            <person name="Topham K."/>
            <person name="Vincent D."/>
            <person name="Wang S."/>
            <person name="Zimmer A.R."/>
            <person name="Birren B.W."/>
            <person name="Hood L."/>
            <person name="Lander E.S."/>
            <person name="Nusbaum C."/>
        </authorList>
    </citation>
    <scope>NUCLEOTIDE SEQUENCE [LARGE SCALE GENOMIC DNA]</scope>
</reference>
<reference key="4">
    <citation type="submission" date="2005-07" db="EMBL/GenBank/DDBJ databases">
        <authorList>
            <person name="Mural R.J."/>
            <person name="Istrail S."/>
            <person name="Sutton G.G."/>
            <person name="Florea L."/>
            <person name="Halpern A.L."/>
            <person name="Mobarry C.M."/>
            <person name="Lippert R."/>
            <person name="Walenz B."/>
            <person name="Shatkay H."/>
            <person name="Dew I."/>
            <person name="Miller J.R."/>
            <person name="Flanigan M.J."/>
            <person name="Edwards N.J."/>
            <person name="Bolanos R."/>
            <person name="Fasulo D."/>
            <person name="Halldorsson B.V."/>
            <person name="Hannenhalli S."/>
            <person name="Turner R."/>
            <person name="Yooseph S."/>
            <person name="Lu F."/>
            <person name="Nusskern D.R."/>
            <person name="Shue B.C."/>
            <person name="Zheng X.H."/>
            <person name="Zhong F."/>
            <person name="Delcher A.L."/>
            <person name="Huson D.H."/>
            <person name="Kravitz S.A."/>
            <person name="Mouchard L."/>
            <person name="Reinert K."/>
            <person name="Remington K.A."/>
            <person name="Clark A.G."/>
            <person name="Waterman M.S."/>
            <person name="Eichler E.E."/>
            <person name="Adams M.D."/>
            <person name="Hunkapiller M.W."/>
            <person name="Myers E.W."/>
            <person name="Venter J.C."/>
        </authorList>
    </citation>
    <scope>NUCLEOTIDE SEQUENCE [LARGE SCALE GENOMIC DNA]</scope>
</reference>
<reference key="5">
    <citation type="journal article" date="2004" name="Genome Res.">
        <title>The status, quality, and expansion of the NIH full-length cDNA project: the Mammalian Gene Collection (MGC).</title>
        <authorList>
            <consortium name="The MGC Project Team"/>
        </authorList>
    </citation>
    <scope>NUCLEOTIDE SEQUENCE [LARGE SCALE MRNA]</scope>
    <source>
        <tissue>Muscle</tissue>
        <tissue>PNS</tissue>
    </source>
</reference>
<reference key="6">
    <citation type="journal article" date="2006" name="Cell">
        <title>Global, in vivo, and site-specific phosphorylation dynamics in signaling networks.</title>
        <authorList>
            <person name="Olsen J.V."/>
            <person name="Blagoev B."/>
            <person name="Gnad F."/>
            <person name="Macek B."/>
            <person name="Kumar C."/>
            <person name="Mortensen P."/>
            <person name="Mann M."/>
        </authorList>
    </citation>
    <scope>PHOSPHORYLATION [LARGE SCALE ANALYSIS] AT SER-116; SER-118; SER-132; SER-133 AND THR-267</scope>
    <scope>IDENTIFICATION BY MASS SPECTROMETRY [LARGE SCALE ANALYSIS]</scope>
    <source>
        <tissue>Cervix carcinoma</tissue>
    </source>
</reference>
<reference key="7">
    <citation type="journal article" date="2007" name="Electrophoresis">
        <title>Toward a global characterization of the phosphoproteome in prostate cancer cells: identification of phosphoproteins in the LNCaP cell line.</title>
        <authorList>
            <person name="Giorgianni F."/>
            <person name="Zhao Y."/>
            <person name="Desiderio D.M."/>
            <person name="Beranova-Giorgianni S."/>
        </authorList>
    </citation>
    <scope>PHOSPHORYLATION [LARGE SCALE ANALYSIS] AT SER-116; SER-118 AND THR-267</scope>
    <scope>IDENTIFICATION BY MASS SPECTROMETRY [LARGE SCALE ANALYSIS]</scope>
    <source>
        <tissue>Prostate cancer</tissue>
    </source>
</reference>
<reference key="8">
    <citation type="journal article" date="2008" name="J. Proteome Res.">
        <title>Combining protein-based IMAC, peptide-based IMAC, and MudPIT for efficient phosphoproteomic analysis.</title>
        <authorList>
            <person name="Cantin G.T."/>
            <person name="Yi W."/>
            <person name="Lu B."/>
            <person name="Park S.K."/>
            <person name="Xu T."/>
            <person name="Lee J.-D."/>
            <person name="Yates J.R. III"/>
        </authorList>
    </citation>
    <scope>IDENTIFICATION BY MASS SPECTROMETRY [LARGE SCALE ANALYSIS]</scope>
    <source>
        <tissue>Cervix carcinoma</tissue>
    </source>
</reference>
<reference key="9">
    <citation type="journal article" date="2008" name="Mol. Cell">
        <title>Kinase-selective enrichment enables quantitative phosphoproteomics of the kinome across the cell cycle.</title>
        <authorList>
            <person name="Daub H."/>
            <person name="Olsen J.V."/>
            <person name="Bairlein M."/>
            <person name="Gnad F."/>
            <person name="Oppermann F.S."/>
            <person name="Korner R."/>
            <person name="Greff Z."/>
            <person name="Keri G."/>
            <person name="Stemmann O."/>
            <person name="Mann M."/>
        </authorList>
    </citation>
    <scope>PHOSPHORYLATION [LARGE SCALE ANALYSIS] AT SER-116; SER-118 AND THR-267</scope>
    <scope>IDENTIFICATION BY MASS SPECTROMETRY [LARGE SCALE ANALYSIS]</scope>
    <source>
        <tissue>Cervix carcinoma</tissue>
    </source>
</reference>
<reference key="10">
    <citation type="journal article" date="2008" name="Proc. Natl. Acad. Sci. U.S.A.">
        <title>A quantitative atlas of mitotic phosphorylation.</title>
        <authorList>
            <person name="Dephoure N."/>
            <person name="Zhou C."/>
            <person name="Villen J."/>
            <person name="Beausoleil S.A."/>
            <person name="Bakalarski C.E."/>
            <person name="Elledge S.J."/>
            <person name="Gygi S.P."/>
        </authorList>
    </citation>
    <scope>PHOSPHORYLATION [LARGE SCALE ANALYSIS] AT SER-52; SER-53 AND THR-267</scope>
    <scope>IDENTIFICATION BY MASS SPECTROMETRY [LARGE SCALE ANALYSIS]</scope>
    <source>
        <tissue>Cervix carcinoma</tissue>
    </source>
</reference>
<reference key="11">
    <citation type="journal article" date="2008" name="Proteomics">
        <title>Large-scale phosphoproteome analysis of human liver tissue by enrichment and fractionation of phosphopeptides with strong anion exchange chromatography.</title>
        <authorList>
            <person name="Han G."/>
            <person name="Ye M."/>
            <person name="Zhou H."/>
            <person name="Jiang X."/>
            <person name="Feng S."/>
            <person name="Jiang X."/>
            <person name="Tian R."/>
            <person name="Wan D."/>
            <person name="Zou H."/>
            <person name="Gu J."/>
        </authorList>
    </citation>
    <scope>PHOSPHORYLATION [LARGE SCALE ANALYSIS] AT SER-116; SER-118 AND THR-267</scope>
    <scope>IDENTIFICATION BY MASS SPECTROMETRY [LARGE SCALE ANALYSIS]</scope>
    <source>
        <tissue>Liver</tissue>
    </source>
</reference>
<reference key="12">
    <citation type="journal article" date="2009" name="Anal. Chem.">
        <title>Lys-N and trypsin cover complementary parts of the phosphoproteome in a refined SCX-based approach.</title>
        <authorList>
            <person name="Gauci S."/>
            <person name="Helbig A.O."/>
            <person name="Slijper M."/>
            <person name="Krijgsveld J."/>
            <person name="Heck A.J."/>
            <person name="Mohammed S."/>
        </authorList>
    </citation>
    <scope>IDENTIFICATION BY MASS SPECTROMETRY [LARGE SCALE ANALYSIS]</scope>
</reference>
<reference key="13">
    <citation type="journal article" date="2009" name="Sci. Signal.">
        <title>Quantitative phosphoproteomic analysis of T cell receptor signaling reveals system-wide modulation of protein-protein interactions.</title>
        <authorList>
            <person name="Mayya V."/>
            <person name="Lundgren D.H."/>
            <person name="Hwang S.-I."/>
            <person name="Rezaul K."/>
            <person name="Wu L."/>
            <person name="Eng J.K."/>
            <person name="Rodionov V."/>
            <person name="Han D.K."/>
        </authorList>
    </citation>
    <scope>PHOSPHORYLATION [LARGE SCALE ANALYSIS] AT SER-52; SER-53; SER-116; SER-132 AND THR-267</scope>
    <scope>IDENTIFICATION BY MASS SPECTROMETRY [LARGE SCALE ANALYSIS]</scope>
    <source>
        <tissue>Leukemic T-cell</tissue>
    </source>
</reference>
<reference key="14">
    <citation type="journal article" date="2010" name="Sci. Signal.">
        <title>Quantitative phosphoproteomics reveals widespread full phosphorylation site occupancy during mitosis.</title>
        <authorList>
            <person name="Olsen J.V."/>
            <person name="Vermeulen M."/>
            <person name="Santamaria A."/>
            <person name="Kumar C."/>
            <person name="Miller M.L."/>
            <person name="Jensen L.J."/>
            <person name="Gnad F."/>
            <person name="Cox J."/>
            <person name="Jensen T.S."/>
            <person name="Nigg E.A."/>
            <person name="Brunak S."/>
            <person name="Mann M."/>
        </authorList>
    </citation>
    <scope>PHOSPHORYLATION [LARGE SCALE ANALYSIS] AT SER-52; SER-53; SER-116; SER-118; SER-132; SER-133 AND THR-267</scope>
    <scope>IDENTIFICATION BY MASS SPECTROMETRY [LARGE SCALE ANALYSIS]</scope>
    <source>
        <tissue>Cervix carcinoma</tissue>
    </source>
</reference>
<reference key="15">
    <citation type="journal article" date="2011" name="BMC Syst. Biol.">
        <title>Initial characterization of the human central proteome.</title>
        <authorList>
            <person name="Burkard T.R."/>
            <person name="Planyavsky M."/>
            <person name="Kaupe I."/>
            <person name="Breitwieser F.P."/>
            <person name="Buerckstuemmer T."/>
            <person name="Bennett K.L."/>
            <person name="Superti-Furga G."/>
            <person name="Colinge J."/>
        </authorList>
    </citation>
    <scope>IDENTIFICATION BY MASS SPECTROMETRY [LARGE SCALE ANALYSIS]</scope>
</reference>
<reference key="16">
    <citation type="journal article" date="2011" name="Sci. Signal.">
        <title>System-wide temporal characterization of the proteome and phosphoproteome of human embryonic stem cell differentiation.</title>
        <authorList>
            <person name="Rigbolt K.T."/>
            <person name="Prokhorova T.A."/>
            <person name="Akimov V."/>
            <person name="Henningsen J."/>
            <person name="Johansen P.T."/>
            <person name="Kratchmarova I."/>
            <person name="Kassem M."/>
            <person name="Mann M."/>
            <person name="Olsen J.V."/>
            <person name="Blagoev B."/>
        </authorList>
    </citation>
    <scope>PHOSPHORYLATION [LARGE SCALE ANALYSIS] AT SER-52; SER-53; SER-116; SER-118; SER-132; SER-133 AND THR-267</scope>
    <scope>IDENTIFICATION BY MASS SPECTROMETRY [LARGE SCALE ANALYSIS]</scope>
</reference>
<reference key="17">
    <citation type="journal article" date="2012" name="Mol. Cell. Proteomics">
        <title>Comparative large-scale characterisation of plant vs. mammal proteins reveals similar and idiosyncratic N-alpha acetylation features.</title>
        <authorList>
            <person name="Bienvenut W.V."/>
            <person name="Sumpton D."/>
            <person name="Martinez A."/>
            <person name="Lilla S."/>
            <person name="Espagne C."/>
            <person name="Meinnel T."/>
            <person name="Giglione C."/>
        </authorList>
    </citation>
    <scope>ACETYLATION [LARGE SCALE ANALYSIS] AT SER-2</scope>
    <scope>CLEAVAGE OF INITIATOR METHIONINE [LARGE SCALE ANALYSIS]</scope>
    <scope>IDENTIFICATION BY MASS SPECTROMETRY [LARGE SCALE ANALYSIS]</scope>
</reference>
<reference key="18">
    <citation type="journal article" date="2012" name="Proc. Natl. Acad. Sci. U.S.A.">
        <title>N-terminal acetylome analyses and functional insights of the N-terminal acetyltransferase NatB.</title>
        <authorList>
            <person name="Van Damme P."/>
            <person name="Lasa M."/>
            <person name="Polevoda B."/>
            <person name="Gazquez C."/>
            <person name="Elosegui-Artola A."/>
            <person name="Kim D.S."/>
            <person name="De Juan-Pardo E."/>
            <person name="Demeyer K."/>
            <person name="Hole K."/>
            <person name="Larrea E."/>
            <person name="Timmerman E."/>
            <person name="Prieto J."/>
            <person name="Arnesen T."/>
            <person name="Sherman F."/>
            <person name="Gevaert K."/>
            <person name="Aldabe R."/>
        </authorList>
    </citation>
    <scope>ACETYLATION [LARGE SCALE ANALYSIS] AT SER-2</scope>
    <scope>CLEAVAGE OF INITIATOR METHIONINE [LARGE SCALE ANALYSIS]</scope>
    <scope>IDENTIFICATION BY MASS SPECTROMETRY [LARGE SCALE ANALYSIS]</scope>
</reference>
<reference key="19">
    <citation type="journal article" date="2013" name="J. Proteome Res.">
        <title>Toward a comprehensive characterization of a human cancer cell phosphoproteome.</title>
        <authorList>
            <person name="Zhou H."/>
            <person name="Di Palma S."/>
            <person name="Preisinger C."/>
            <person name="Peng M."/>
            <person name="Polat A.N."/>
            <person name="Heck A.J."/>
            <person name="Mohammed S."/>
        </authorList>
    </citation>
    <scope>PHOSPHORYLATION [LARGE SCALE ANALYSIS] AT SER-52; SER-53; SER-94; SER-116; SER-118; SER-132; SER-133; THR-267; SER-361 AND SER-432</scope>
    <scope>IDENTIFICATION BY MASS SPECTROMETRY [LARGE SCALE ANALYSIS]</scope>
    <source>
        <tissue>Cervix carcinoma</tissue>
        <tissue>Erythroleukemia</tissue>
    </source>
</reference>
<reference key="20">
    <citation type="journal article" date="2014" name="J. Proteomics">
        <title>An enzyme assisted RP-RPLC approach for in-depth analysis of human liver phosphoproteome.</title>
        <authorList>
            <person name="Bian Y."/>
            <person name="Song C."/>
            <person name="Cheng K."/>
            <person name="Dong M."/>
            <person name="Wang F."/>
            <person name="Huang J."/>
            <person name="Sun D."/>
            <person name="Wang L."/>
            <person name="Ye M."/>
            <person name="Zou H."/>
        </authorList>
    </citation>
    <scope>PHOSPHORYLATION [LARGE SCALE ANALYSIS] AT SER-53; SER-116; SER-118 AND THR-267</scope>
    <scope>IDENTIFICATION BY MASS SPECTROMETRY [LARGE SCALE ANALYSIS]</scope>
    <source>
        <tissue>Liver</tissue>
    </source>
</reference>
<reference key="21">
    <citation type="journal article" date="2015" name="Mol. Cell. Proteomics">
        <title>System-wide analysis of SUMOylation dynamics in response to replication stress reveals novel small ubiquitin-like modified target proteins and acceptor lysines relevant for genome stability.</title>
        <authorList>
            <person name="Xiao Z."/>
            <person name="Chang J.G."/>
            <person name="Hendriks I.A."/>
            <person name="Sigurdsson J.O."/>
            <person name="Olsen J.V."/>
            <person name="Vertegaal A.C."/>
        </authorList>
    </citation>
    <scope>SUMOYLATION [LARGE SCALE ANALYSIS] AT LYS-249</scope>
    <scope>IDENTIFICATION BY MASS SPECTROMETRY [LARGE SCALE ANALYSIS]</scope>
</reference>
<reference key="22">
    <citation type="journal article" date="2016" name="RNA">
        <title>Multiple protein-protein interactions converging on the Prp38 protein during activation of the human spliceosome.</title>
        <authorList>
            <person name="Schuetze T."/>
            <person name="Ulrich A.K."/>
            <person name="Apelt L."/>
            <person name="Will C.L."/>
            <person name="Bartlick N."/>
            <person name="Seeger M."/>
            <person name="Weber G."/>
            <person name="Luehrmann R."/>
            <person name="Stelzl U."/>
            <person name="Wahl M.C."/>
        </authorList>
    </citation>
    <scope>INTERACTION WITH PRPF38A</scope>
</reference>
<reference key="23">
    <citation type="journal article" date="2017" name="Nat. Struct. Mol. Biol.">
        <title>Site-specific mapping of the human SUMO proteome reveals co-modification with phosphorylation.</title>
        <authorList>
            <person name="Hendriks I.A."/>
            <person name="Lyon D."/>
            <person name="Young C."/>
            <person name="Jensen L.J."/>
            <person name="Vertegaal A.C."/>
            <person name="Nielsen M.L."/>
        </authorList>
    </citation>
    <scope>SUMOYLATION [LARGE SCALE ANALYSIS] AT LYS-67; LYS-249; LYS-357; LYS-371; LYS-381; LYS-415 AND LYS-418</scope>
    <scope>IDENTIFICATION BY MASS SPECTROMETRY [LARGE SCALE ANALYSIS]</scope>
</reference>
<reference evidence="8" key="24">
    <citation type="journal article" date="2016" name="Structure">
        <title>Scaffolding in the Spliceosome via Single alpha Helices.</title>
        <authorList>
            <person name="Ulrich A.K.C."/>
            <person name="Seeger M."/>
            <person name="Schutze T."/>
            <person name="Bartlick N."/>
            <person name="Wahl M.C."/>
        </authorList>
    </citation>
    <scope>X-RAY CRYSTALLOGRAPHY (2.40 ANGSTROMS) OF 267-344 IN COMPLEX WITH PRPF38A</scope>
    <scope>INTERACTION WITH PRPF38A</scope>
</reference>
<reference evidence="9" key="25">
    <citation type="journal article" date="2017" name="Cell">
        <title>Cryo-EM Structure of a Pre-catalytic Human Spliceosome Primed for Activation.</title>
        <authorList>
            <person name="Bertram K."/>
            <person name="Agafonov D.E."/>
            <person name="Dybkov O."/>
            <person name="Haselbach D."/>
            <person name="Leelaram M.N."/>
            <person name="Will C.L."/>
            <person name="Urlaub H."/>
            <person name="Kastner B."/>
            <person name="Luhrmann R."/>
            <person name="Stark H."/>
        </authorList>
    </citation>
    <scope>STRUCTURE BY ELECTRON MICROSCOPY (4.50 ANGSTROMS)</scope>
    <scope>IDENTIFICATION BY MASS SPECTROMETRY</scope>
    <scope>FUNCTION</scope>
    <scope>SUBCELLULAR LOCATION</scope>
    <scope>SUBUNIT</scope>
</reference>